<gene>
    <name evidence="1" type="primary">rsgA</name>
    <name type="ordered locus">BC_3859</name>
</gene>
<evidence type="ECO:0000255" key="1">
    <source>
        <dbReference type="HAMAP-Rule" id="MF_01820"/>
    </source>
</evidence>
<evidence type="ECO:0000255" key="2">
    <source>
        <dbReference type="PROSITE-ProRule" id="PRU01058"/>
    </source>
</evidence>
<name>RSGA_BACCR</name>
<accession>Q819U6</accession>
<feature type="chain" id="PRO_0000171462" description="Small ribosomal subunit biogenesis GTPase RsgA">
    <location>
        <begin position="1"/>
        <end position="293"/>
    </location>
</feature>
<feature type="domain" description="CP-type G" evidence="2">
    <location>
        <begin position="63"/>
        <end position="223"/>
    </location>
</feature>
<feature type="binding site" evidence="1">
    <location>
        <begin position="112"/>
        <end position="115"/>
    </location>
    <ligand>
        <name>GTP</name>
        <dbReference type="ChEBI" id="CHEBI:37565"/>
    </ligand>
</feature>
<feature type="binding site" evidence="1">
    <location>
        <begin position="166"/>
        <end position="174"/>
    </location>
    <ligand>
        <name>GTP</name>
        <dbReference type="ChEBI" id="CHEBI:37565"/>
    </ligand>
</feature>
<feature type="binding site" evidence="1">
    <location>
        <position position="247"/>
    </location>
    <ligand>
        <name>Zn(2+)</name>
        <dbReference type="ChEBI" id="CHEBI:29105"/>
    </ligand>
</feature>
<feature type="binding site" evidence="1">
    <location>
        <position position="252"/>
    </location>
    <ligand>
        <name>Zn(2+)</name>
        <dbReference type="ChEBI" id="CHEBI:29105"/>
    </ligand>
</feature>
<feature type="binding site" evidence="1">
    <location>
        <position position="254"/>
    </location>
    <ligand>
        <name>Zn(2+)</name>
        <dbReference type="ChEBI" id="CHEBI:29105"/>
    </ligand>
</feature>
<feature type="binding site" evidence="1">
    <location>
        <position position="260"/>
    </location>
    <ligand>
        <name>Zn(2+)</name>
        <dbReference type="ChEBI" id="CHEBI:29105"/>
    </ligand>
</feature>
<keyword id="KW-0963">Cytoplasm</keyword>
<keyword id="KW-0342">GTP-binding</keyword>
<keyword id="KW-0378">Hydrolase</keyword>
<keyword id="KW-0479">Metal-binding</keyword>
<keyword id="KW-0547">Nucleotide-binding</keyword>
<keyword id="KW-1185">Reference proteome</keyword>
<keyword id="KW-0690">Ribosome biogenesis</keyword>
<keyword id="KW-0694">RNA-binding</keyword>
<keyword id="KW-0699">rRNA-binding</keyword>
<keyword id="KW-0862">Zinc</keyword>
<sequence>MPEGKIIKALSGFYYVQHEEGVTQCRGRGVFRKNKITPLVGDQVVFQADNPTEGYVLEVFDRKNELVRPPIANVDQAILVFSAVEPDFNPGLLDRFLVLIEYHNIKPIICISKMDLVDEKMKATVEAYANDYREMGYDVLFTSINTSESIDILKPYLENCVSVVAGQSGVGKSSMLNVLRPELELKTNDISSHLGRGKHTTRHVELIAIGSGLVADTPGFSSLDFIDIEVEDLTYCFPELKEASQYCKFRGCTHLSEPKCAVKAAVEEGKITEYRYKNYKQFVEEIRERKPRY</sequence>
<proteinExistence type="inferred from homology"/>
<protein>
    <recommendedName>
        <fullName evidence="1">Small ribosomal subunit biogenesis GTPase RsgA</fullName>
        <ecNumber evidence="1">3.6.1.-</ecNumber>
    </recommendedName>
</protein>
<comment type="function">
    <text evidence="1">One of several proteins that assist in the late maturation steps of the functional core of the 30S ribosomal subunit. Helps release RbfA from mature subunits. May play a role in the assembly of ribosomal proteins into the subunit. Circularly permuted GTPase that catalyzes slow GTP hydrolysis, GTPase activity is stimulated by the 30S ribosomal subunit.</text>
</comment>
<comment type="cofactor">
    <cofactor evidence="1">
        <name>Zn(2+)</name>
        <dbReference type="ChEBI" id="CHEBI:29105"/>
    </cofactor>
    <text evidence="1">Binds 1 zinc ion per subunit.</text>
</comment>
<comment type="subunit">
    <text evidence="1">Monomer. Associates with 30S ribosomal subunit, binds 16S rRNA.</text>
</comment>
<comment type="subcellular location">
    <subcellularLocation>
        <location evidence="1">Cytoplasm</location>
    </subcellularLocation>
</comment>
<comment type="similarity">
    <text evidence="1">Belongs to the TRAFAC class YlqF/YawG GTPase family. RsgA subfamily.</text>
</comment>
<organism>
    <name type="scientific">Bacillus cereus (strain ATCC 14579 / DSM 31 / CCUG 7414 / JCM 2152 / NBRC 15305 / NCIMB 9373 / NCTC 2599 / NRRL B-3711)</name>
    <dbReference type="NCBI Taxonomy" id="226900"/>
    <lineage>
        <taxon>Bacteria</taxon>
        <taxon>Bacillati</taxon>
        <taxon>Bacillota</taxon>
        <taxon>Bacilli</taxon>
        <taxon>Bacillales</taxon>
        <taxon>Bacillaceae</taxon>
        <taxon>Bacillus</taxon>
        <taxon>Bacillus cereus group</taxon>
    </lineage>
</organism>
<dbReference type="EC" id="3.6.1.-" evidence="1"/>
<dbReference type="EMBL" id="AE016877">
    <property type="protein sequence ID" value="AAP10781.1"/>
    <property type="molecule type" value="Genomic_DNA"/>
</dbReference>
<dbReference type="RefSeq" id="NP_833580.1">
    <property type="nucleotide sequence ID" value="NC_004722.1"/>
</dbReference>
<dbReference type="RefSeq" id="WP_001113932.1">
    <property type="nucleotide sequence ID" value="NZ_CP138336.1"/>
</dbReference>
<dbReference type="SMR" id="Q819U6"/>
<dbReference type="STRING" id="226900.BC_3859"/>
<dbReference type="GeneID" id="72450541"/>
<dbReference type="KEGG" id="bce:BC3859"/>
<dbReference type="PATRIC" id="fig|226900.8.peg.3978"/>
<dbReference type="HOGENOM" id="CLU_033617_2_1_9"/>
<dbReference type="OrthoDB" id="9809485at2"/>
<dbReference type="Proteomes" id="UP000001417">
    <property type="component" value="Chromosome"/>
</dbReference>
<dbReference type="GO" id="GO:0005737">
    <property type="term" value="C:cytoplasm"/>
    <property type="evidence" value="ECO:0007669"/>
    <property type="project" value="UniProtKB-SubCell"/>
</dbReference>
<dbReference type="GO" id="GO:0005525">
    <property type="term" value="F:GTP binding"/>
    <property type="evidence" value="ECO:0007669"/>
    <property type="project" value="UniProtKB-UniRule"/>
</dbReference>
<dbReference type="GO" id="GO:0003924">
    <property type="term" value="F:GTPase activity"/>
    <property type="evidence" value="ECO:0007669"/>
    <property type="project" value="UniProtKB-UniRule"/>
</dbReference>
<dbReference type="GO" id="GO:0046872">
    <property type="term" value="F:metal ion binding"/>
    <property type="evidence" value="ECO:0007669"/>
    <property type="project" value="UniProtKB-KW"/>
</dbReference>
<dbReference type="GO" id="GO:0019843">
    <property type="term" value="F:rRNA binding"/>
    <property type="evidence" value="ECO:0007669"/>
    <property type="project" value="UniProtKB-KW"/>
</dbReference>
<dbReference type="GO" id="GO:0042274">
    <property type="term" value="P:ribosomal small subunit biogenesis"/>
    <property type="evidence" value="ECO:0007669"/>
    <property type="project" value="UniProtKB-UniRule"/>
</dbReference>
<dbReference type="CDD" id="cd04466">
    <property type="entry name" value="S1_YloQ_GTPase"/>
    <property type="match status" value="1"/>
</dbReference>
<dbReference type="CDD" id="cd01854">
    <property type="entry name" value="YjeQ_EngC"/>
    <property type="match status" value="1"/>
</dbReference>
<dbReference type="Gene3D" id="2.40.50.140">
    <property type="entry name" value="Nucleic acid-binding proteins"/>
    <property type="match status" value="1"/>
</dbReference>
<dbReference type="Gene3D" id="3.40.50.300">
    <property type="entry name" value="P-loop containing nucleotide triphosphate hydrolases"/>
    <property type="match status" value="1"/>
</dbReference>
<dbReference type="Gene3D" id="1.10.40.50">
    <property type="entry name" value="Probable gtpase engc, domain 3"/>
    <property type="match status" value="1"/>
</dbReference>
<dbReference type="HAMAP" id="MF_01820">
    <property type="entry name" value="GTPase_RsgA"/>
    <property type="match status" value="1"/>
</dbReference>
<dbReference type="InterPro" id="IPR030378">
    <property type="entry name" value="G_CP_dom"/>
</dbReference>
<dbReference type="InterPro" id="IPR012340">
    <property type="entry name" value="NA-bd_OB-fold"/>
</dbReference>
<dbReference type="InterPro" id="IPR027417">
    <property type="entry name" value="P-loop_NTPase"/>
</dbReference>
<dbReference type="InterPro" id="IPR004881">
    <property type="entry name" value="Ribosome_biogen_GTPase_RsgA"/>
</dbReference>
<dbReference type="InterPro" id="IPR010914">
    <property type="entry name" value="RsgA_GTPase_dom"/>
</dbReference>
<dbReference type="InterPro" id="IPR031944">
    <property type="entry name" value="RsgA_N"/>
</dbReference>
<dbReference type="NCBIfam" id="TIGR00157">
    <property type="entry name" value="ribosome small subunit-dependent GTPase A"/>
    <property type="match status" value="1"/>
</dbReference>
<dbReference type="PANTHER" id="PTHR32120">
    <property type="entry name" value="SMALL RIBOSOMAL SUBUNIT BIOGENESIS GTPASE RSGA"/>
    <property type="match status" value="1"/>
</dbReference>
<dbReference type="PANTHER" id="PTHR32120:SF11">
    <property type="entry name" value="SMALL RIBOSOMAL SUBUNIT BIOGENESIS GTPASE RSGA 1, MITOCHONDRIAL-RELATED"/>
    <property type="match status" value="1"/>
</dbReference>
<dbReference type="Pfam" id="PF03193">
    <property type="entry name" value="RsgA_GTPase"/>
    <property type="match status" value="1"/>
</dbReference>
<dbReference type="Pfam" id="PF16745">
    <property type="entry name" value="RsgA_N"/>
    <property type="match status" value="1"/>
</dbReference>
<dbReference type="SUPFAM" id="SSF50249">
    <property type="entry name" value="Nucleic acid-binding proteins"/>
    <property type="match status" value="1"/>
</dbReference>
<dbReference type="SUPFAM" id="SSF52540">
    <property type="entry name" value="P-loop containing nucleoside triphosphate hydrolases"/>
    <property type="match status" value="1"/>
</dbReference>
<dbReference type="PROSITE" id="PS50936">
    <property type="entry name" value="ENGC_GTPASE"/>
    <property type="match status" value="1"/>
</dbReference>
<dbReference type="PROSITE" id="PS51721">
    <property type="entry name" value="G_CP"/>
    <property type="match status" value="1"/>
</dbReference>
<reference key="1">
    <citation type="journal article" date="2003" name="Nature">
        <title>Genome sequence of Bacillus cereus and comparative analysis with Bacillus anthracis.</title>
        <authorList>
            <person name="Ivanova N."/>
            <person name="Sorokin A."/>
            <person name="Anderson I."/>
            <person name="Galleron N."/>
            <person name="Candelon B."/>
            <person name="Kapatral V."/>
            <person name="Bhattacharyya A."/>
            <person name="Reznik G."/>
            <person name="Mikhailova N."/>
            <person name="Lapidus A."/>
            <person name="Chu L."/>
            <person name="Mazur M."/>
            <person name="Goltsman E."/>
            <person name="Larsen N."/>
            <person name="D'Souza M."/>
            <person name="Walunas T."/>
            <person name="Grechkin Y."/>
            <person name="Pusch G."/>
            <person name="Haselkorn R."/>
            <person name="Fonstein M."/>
            <person name="Ehrlich S.D."/>
            <person name="Overbeek R."/>
            <person name="Kyrpides N.C."/>
        </authorList>
    </citation>
    <scope>NUCLEOTIDE SEQUENCE [LARGE SCALE GENOMIC DNA]</scope>
    <source>
        <strain>ATCC 14579 / DSM 31 / CCUG 7414 / JCM 2152 / NBRC 15305 / NCIMB 9373 / NCTC 2599 / NRRL B-3711</strain>
    </source>
</reference>